<evidence type="ECO:0000250" key="1">
    <source>
        <dbReference type="UniProtKB" id="P78411"/>
    </source>
</evidence>
<evidence type="ECO:0000255" key="2"/>
<evidence type="ECO:0000255" key="3">
    <source>
        <dbReference type="PROSITE-ProRule" id="PRU00108"/>
    </source>
</evidence>
<evidence type="ECO:0000256" key="4">
    <source>
        <dbReference type="SAM" id="MobiDB-lite"/>
    </source>
</evidence>
<evidence type="ECO:0000269" key="5">
    <source>
    </source>
</evidence>
<evidence type="ECO:0000269" key="6">
    <source>
    </source>
</evidence>
<evidence type="ECO:0000269" key="7">
    <source>
    </source>
</evidence>
<evidence type="ECO:0000269" key="8">
    <source>
    </source>
</evidence>
<evidence type="ECO:0000269" key="9">
    <source>
    </source>
</evidence>
<evidence type="ECO:0000269" key="10">
    <source>
    </source>
</evidence>
<evidence type="ECO:0000303" key="11">
    <source>
    </source>
</evidence>
<evidence type="ECO:0000305" key="12"/>
<evidence type="ECO:0000312" key="13">
    <source>
        <dbReference type="EMBL" id="AAK96066.1"/>
    </source>
</evidence>
<feature type="chain" id="PRO_0000388721" description="Iroquois-class homeodomain protein irx-5">
    <location>
        <begin position="1"/>
        <end position="474"/>
    </location>
</feature>
<feature type="DNA-binding region" description="Homeobox; TALE-type" evidence="3">
    <location>
        <begin position="109"/>
        <end position="171"/>
    </location>
</feature>
<feature type="region of interest" description="Disordered" evidence="4">
    <location>
        <begin position="174"/>
        <end position="222"/>
    </location>
</feature>
<feature type="region of interest" description="Disordered" evidence="4">
    <location>
        <begin position="252"/>
        <end position="294"/>
    </location>
</feature>
<feature type="region of interest" description="Disordered" evidence="4">
    <location>
        <begin position="453"/>
        <end position="474"/>
    </location>
</feature>
<feature type="compositionally biased region" description="Acidic residues" evidence="4">
    <location>
        <begin position="182"/>
        <end position="199"/>
    </location>
</feature>
<feature type="compositionally biased region" description="Pro residues" evidence="4">
    <location>
        <begin position="263"/>
        <end position="273"/>
    </location>
</feature>
<comment type="function">
    <text evidence="9 10">Acts partially redundantly with other irx members in neural patterning. Required for formation of the posterior forebrain, midbrain, hindbrain, and to a lesser extent, spinal cord. Patterns the neuroectoderm in both the anterior/posterior and dorsal/ventral axes. Does not appear to play a role in pronephros kidney development. Involved in craniofacial and gonadal development. Modulates the migration of progenitor cell populations in branchial arches and gonads by repressing CXCL12.</text>
</comment>
<comment type="subcellular location">
    <subcellularLocation>
        <location evidence="2 12">Nucleus</location>
    </subcellularLocation>
</comment>
<comment type="tissue specificity">
    <text evidence="5 6 7 8 9">Early in gastrulation, expressed in cells beneath the blastopore lip. Subsequently expressed in the neural plate in overlapping patterns with other irx members, which all share an anterior border of expression. At the time of neural tube closure (stage 19) in regions of the midbrain, hindbrain, neural tube and optic vesicle, where expression continues during tailbud stages. In stage 34, expressed throughout the eye retina. Does not appear to be expressed in the developing heart or pronephros.</text>
</comment>
<comment type="induction">
    <text evidence="6">By hoxb4 and hoxb5. Down-regulated by hoxb9.</text>
</comment>
<comment type="similarity">
    <text evidence="2">Belongs to the TALE/IRO homeobox family.</text>
</comment>
<sequence length="474" mass="51757">MSYPQGYLYQPSASLALYSCPAYSTTVISGPRTDELGRSPSGSAFSPYAGSTAFTASSAGFSSPLQYSGDPAAAFTSYVGSPYDHSAGMAGSLEYHPYAAPLGIYAYGDPAYRKNASRDATATLKAWLNEHRKNPYPTKGEKIMLAIITKMTLTQVSTWFANARRRLKKENKMTWTPRNRSEDEDDDENIDLEKNEEDDPSKLEENGNQDGDAGDQKRSPDGVDFVRLEGEVHLGKELDQTRNNSELNELDERNGHLSNSSSPPTPPLCPPDQSPQAQEDQNLHGHTHQSIQQLLHHSNQPHPLDLVNRNTSVQHGPVTNNATSVIHSPPASTSKPKLWSLAEIATSSDKVKERSNAAEVAGTTAAKSMVVSASSPSRSPSAQCHFPNNTVLSRPLYYSIPFYPGYTNYGTFSHLHSHHGPSSSVNSTYHFNGINQPVLNKAEGLAKECKHISQSQDDLNKGTPYEMKKGMSSI</sequence>
<protein>
    <recommendedName>
        <fullName evidence="11">Iroquois-class homeodomain protein irx-5</fullName>
    </recommendedName>
    <alternativeName>
        <fullName evidence="1">Iroquois homeobox protein 5</fullName>
    </alternativeName>
</protein>
<accession>Q90XW5</accession>
<gene>
    <name type="primary">irx5</name>
</gene>
<proteinExistence type="evidence at transcript level"/>
<dbReference type="EMBL" id="AF338158">
    <property type="protein sequence ID" value="AAK96066.1"/>
    <property type="molecule type" value="mRNA"/>
</dbReference>
<dbReference type="RefSeq" id="NP_001079223.1">
    <property type="nucleotide sequence ID" value="NM_001085754.1"/>
</dbReference>
<dbReference type="SMR" id="Q90XW5"/>
<dbReference type="GeneID" id="373841"/>
<dbReference type="KEGG" id="xla:373841"/>
<dbReference type="AGR" id="Xenbase:XB-GENE-865076"/>
<dbReference type="CTD" id="373841"/>
<dbReference type="Xenbase" id="XB-GENE-865076">
    <property type="gene designation" value="irx5.L"/>
</dbReference>
<dbReference type="OrthoDB" id="5399138at2759"/>
<dbReference type="Proteomes" id="UP000186698">
    <property type="component" value="Chromosome 4L"/>
</dbReference>
<dbReference type="Bgee" id="373841">
    <property type="expression patterns" value="Expressed in internal ear and 9 other cell types or tissues"/>
</dbReference>
<dbReference type="GO" id="GO:0005737">
    <property type="term" value="C:cytoplasm"/>
    <property type="evidence" value="ECO:0000250"/>
    <property type="project" value="UniProtKB"/>
</dbReference>
<dbReference type="GO" id="GO:0005634">
    <property type="term" value="C:nucleus"/>
    <property type="evidence" value="ECO:0000250"/>
    <property type="project" value="UniProtKB"/>
</dbReference>
<dbReference type="GO" id="GO:0000981">
    <property type="term" value="F:DNA-binding transcription factor activity, RNA polymerase II-specific"/>
    <property type="evidence" value="ECO:0000318"/>
    <property type="project" value="GO_Central"/>
</dbReference>
<dbReference type="GO" id="GO:0000978">
    <property type="term" value="F:RNA polymerase II cis-regulatory region sequence-specific DNA binding"/>
    <property type="evidence" value="ECO:0000318"/>
    <property type="project" value="GO_Central"/>
</dbReference>
<dbReference type="GO" id="GO:0007420">
    <property type="term" value="P:brain development"/>
    <property type="evidence" value="ECO:0000315"/>
    <property type="project" value="UniProtKB"/>
</dbReference>
<dbReference type="GO" id="GO:0048468">
    <property type="term" value="P:cell development"/>
    <property type="evidence" value="ECO:0000318"/>
    <property type="project" value="GO_Central"/>
</dbReference>
<dbReference type="GO" id="GO:0009953">
    <property type="term" value="P:dorsal/ventral pattern formation"/>
    <property type="evidence" value="ECO:0000315"/>
    <property type="project" value="UniProtKB"/>
</dbReference>
<dbReference type="GO" id="GO:0048701">
    <property type="term" value="P:embryonic cranial skeleton morphogenesis"/>
    <property type="evidence" value="ECO:0000315"/>
    <property type="project" value="UniProtKB"/>
</dbReference>
<dbReference type="GO" id="GO:0008406">
    <property type="term" value="P:gonad development"/>
    <property type="evidence" value="ECO:0000315"/>
    <property type="project" value="UniProtKB"/>
</dbReference>
<dbReference type="GO" id="GO:0030182">
    <property type="term" value="P:neuron differentiation"/>
    <property type="evidence" value="ECO:0000318"/>
    <property type="project" value="GO_Central"/>
</dbReference>
<dbReference type="GO" id="GO:0009954">
    <property type="term" value="P:proximal/distal pattern formation"/>
    <property type="evidence" value="ECO:0000315"/>
    <property type="project" value="UniProtKB"/>
</dbReference>
<dbReference type="GO" id="GO:0006357">
    <property type="term" value="P:regulation of transcription by RNA polymerase II"/>
    <property type="evidence" value="ECO:0000318"/>
    <property type="project" value="GO_Central"/>
</dbReference>
<dbReference type="CDD" id="cd00086">
    <property type="entry name" value="homeodomain"/>
    <property type="match status" value="1"/>
</dbReference>
<dbReference type="FunFam" id="1.10.10.60:FF:000003">
    <property type="entry name" value="Iroquois-class homeobox protein IRX"/>
    <property type="match status" value="1"/>
</dbReference>
<dbReference type="Gene3D" id="1.10.10.60">
    <property type="entry name" value="Homeodomain-like"/>
    <property type="match status" value="1"/>
</dbReference>
<dbReference type="InterPro" id="IPR001356">
    <property type="entry name" value="HD"/>
</dbReference>
<dbReference type="InterPro" id="IPR017970">
    <property type="entry name" value="Homeobox_CS"/>
</dbReference>
<dbReference type="InterPro" id="IPR009057">
    <property type="entry name" value="Homeodomain-like_sf"/>
</dbReference>
<dbReference type="InterPro" id="IPR003893">
    <property type="entry name" value="Iroquois_homeo"/>
</dbReference>
<dbReference type="InterPro" id="IPR008422">
    <property type="entry name" value="KN_HD"/>
</dbReference>
<dbReference type="PANTHER" id="PTHR11211">
    <property type="entry name" value="IROQUOIS-CLASS HOMEODOMAIN PROTEIN IRX"/>
    <property type="match status" value="1"/>
</dbReference>
<dbReference type="PANTHER" id="PTHR11211:SF17">
    <property type="entry name" value="IROQUOIS-CLASS HOMEODOMAIN PROTEIN IRX-5"/>
    <property type="match status" value="1"/>
</dbReference>
<dbReference type="Pfam" id="PF05920">
    <property type="entry name" value="Homeobox_KN"/>
    <property type="match status" value="1"/>
</dbReference>
<dbReference type="SMART" id="SM00389">
    <property type="entry name" value="HOX"/>
    <property type="match status" value="1"/>
</dbReference>
<dbReference type="SMART" id="SM00548">
    <property type="entry name" value="IRO"/>
    <property type="match status" value="1"/>
</dbReference>
<dbReference type="SUPFAM" id="SSF46689">
    <property type="entry name" value="Homeodomain-like"/>
    <property type="match status" value="1"/>
</dbReference>
<dbReference type="PROSITE" id="PS00027">
    <property type="entry name" value="HOMEOBOX_1"/>
    <property type="match status" value="1"/>
</dbReference>
<dbReference type="PROSITE" id="PS50071">
    <property type="entry name" value="HOMEOBOX_2"/>
    <property type="match status" value="1"/>
</dbReference>
<name>IRX5_XENLA</name>
<keyword id="KW-0217">Developmental protein</keyword>
<keyword id="KW-0221">Differentiation</keyword>
<keyword id="KW-0238">DNA-binding</keyword>
<keyword id="KW-0371">Homeobox</keyword>
<keyword id="KW-0524">Neurogenesis</keyword>
<keyword id="KW-0539">Nucleus</keyword>
<keyword id="KW-1185">Reference proteome</keyword>
<keyword id="KW-0804">Transcription</keyword>
<keyword id="KW-0805">Transcription regulation</keyword>
<organism>
    <name type="scientific">Xenopus laevis</name>
    <name type="common">African clawed frog</name>
    <dbReference type="NCBI Taxonomy" id="8355"/>
    <lineage>
        <taxon>Eukaryota</taxon>
        <taxon>Metazoa</taxon>
        <taxon>Chordata</taxon>
        <taxon>Craniata</taxon>
        <taxon>Vertebrata</taxon>
        <taxon>Euteleostomi</taxon>
        <taxon>Amphibia</taxon>
        <taxon>Batrachia</taxon>
        <taxon>Anura</taxon>
        <taxon>Pipoidea</taxon>
        <taxon>Pipidae</taxon>
        <taxon>Xenopodinae</taxon>
        <taxon>Xenopus</taxon>
        <taxon>Xenopus</taxon>
    </lineage>
</organism>
<reference evidence="12 13" key="1">
    <citation type="journal article" date="2001" name="Dev. Genes Evol.">
        <title>Developmental expression of the Xenopus Iroquois-family homeobox genes, Irx4 and Irx5.</title>
        <authorList>
            <person name="Garriock R.J."/>
            <person name="Vokes S.A."/>
            <person name="Small E.M."/>
            <person name="Larson R."/>
            <person name="Krieg P.A."/>
        </authorList>
    </citation>
    <scope>NUCLEOTIDE SEQUENCE [MRNA]</scope>
    <scope>TISSUE SPECIFICITY</scope>
</reference>
<reference evidence="12" key="2">
    <citation type="journal article" date="2003" name="Dev. Dyn.">
        <title>TALE class homeodomain gene Irx5 is an immediate downstream target for Hoxb4 transcriptional regulation.</title>
        <authorList>
            <person name="Theokli C."/>
            <person name="Morsi El-Kadi A.S."/>
            <person name="Morgan R."/>
        </authorList>
    </citation>
    <scope>TISSUE SPECIFICITY</scope>
    <scope>INDUCTION</scope>
</reference>
<reference evidence="12" key="3">
    <citation type="journal article" date="2007" name="Genes Dev.">
        <title>The prepattern transcription factor Irx3 directs nephron segment identity.</title>
        <authorList>
            <person name="Reggiani L."/>
            <person name="Raciti D."/>
            <person name="Airik R."/>
            <person name="Kispert A."/>
            <person name="Braendli A.W."/>
        </authorList>
    </citation>
    <scope>LACK OF EXPRESSION IN THE PRONEPHROS</scope>
</reference>
<reference evidence="12" key="4">
    <citation type="journal article" date="2008" name="Development">
        <title>A dual requirement for Iroquois genes during Xenopus kidney development.</title>
        <authorList>
            <person name="Alarcon P."/>
            <person name="Rodriguez-Seguel E."/>
            <person name="Fernandez-Gonzalez A."/>
            <person name="Rubio R."/>
            <person name="Gomez-Skarmeta J.L."/>
        </authorList>
    </citation>
    <scope>LACK OF REQUIREMENT FOR PRONEPHROS DEVELOPMENT</scope>
    <scope>LACK OF EXPRESSION IN THE PRONEPHROS</scope>
</reference>
<reference evidence="12" key="5">
    <citation type="journal article" date="2009" name="Dev. Biol.">
        <title>The Xenopus Irx genes are essential for neural patterning and define the border between prethalamus and thalamus through mutual antagonism with the anterior repressors Fezf and Arx.</title>
        <authorList>
            <person name="Rodriguez-Seguel E."/>
            <person name="Alarcon P."/>
            <person name="Gomez-Skarmeta J.L."/>
        </authorList>
    </citation>
    <scope>FUNCTION</scope>
    <scope>TISSUE SPECIFICITY</scope>
</reference>
<reference key="6">
    <citation type="journal article" date="2012" name="Nat. Genet.">
        <title>Mutations in IRX5 impair craniofacial development and germ cell migration via SDF1.</title>
        <authorList>
            <person name="Bonnard C."/>
            <person name="Strobl A.C."/>
            <person name="Shboul M."/>
            <person name="Lee H."/>
            <person name="Merriman B."/>
            <person name="Nelson S.F."/>
            <person name="Ababneh O.H."/>
            <person name="Uz E."/>
            <person name="Guran T."/>
            <person name="Kayserili H."/>
            <person name="Hamamy H."/>
            <person name="Reversade B."/>
        </authorList>
    </citation>
    <scope>FUNCTION</scope>
</reference>